<gene>
    <name type="primary">Magoh</name>
</gene>
<feature type="chain" id="PRO_0000174147" description="Protein mago nashi homolog">
    <location>
        <begin position="1"/>
        <end position="146"/>
    </location>
</feature>
<feature type="modified residue" description="N-acetylmethionine" evidence="1">
    <location>
        <position position="1"/>
    </location>
</feature>
<proteinExistence type="evidence at transcript level"/>
<comment type="function">
    <text evidence="1">Required for pre-mRNA splicing as component of the spliceosome. Plays a redundant role with MAGOHB as core component of the exon junction complex (EJC) and in the nonsense-mediated decay (NMD) pathway. The EJC is a dynamic structure consisting of core proteins and several peripheral nuclear and cytoplasmic associated factors that join the complex only transiently either during EJC assembly or during subsequent mRNA metabolism. The EJC marks the position of the exon-exon junction in the mature mRNA for the gene expression machinery and the core components remain bound to spliced mRNAs throughout all stages of mRNA metabolism thereby influencing downstream processes including nuclear mRNA export, subcellular mRNA localization, translation efficiency and nonsense-mediated mRNA decay (NMD). The MAGOH-RBM8A heterodimer inhibits the ATPase activity of EIF4A3, thereby trapping the ATP-bound EJC core onto spliced mRNA in a stable conformation. The MAGOH-RBM8A heterodimer interacts with the EJC key regulator PYM1 leading to EJC disassembly in the cytoplasm and translation enhancement of EJC-bearing spliced mRNAs by recruiting them to the ribosomal 48S pre-initiation complex. Involved in the splicing modulation of BCL2L1/Bcl-X (and probably other apoptotic genes); specifically inhibits formation of proapoptotic isoforms; the function is different from the established EJC assembly.</text>
</comment>
<comment type="subunit">
    <text evidence="1">Heterodimer with RBM8A. Core component of the mRNA splicing-dependent exon junction complex (EJC); the core complex contains CASC3, EIF4A3, MAGOH or MAGOHB, and RBM8A. Component of the ALYREF/THOC4-EJC-RNA complex; in the complex interacts with EIF4A3, RBM8A and THOC4 (via the RRM domain); these interactions are likely specific to RNA-bound EJC (By similarity). Interacts with PYM1; the interaction is direct and dissociates the EJC from spliced mRNAs. Identified in a complex composed of the EJC core, UPF3B and UPF2. The EJC core can also interact with UPF3A (in vitro). Identified in the spliceosome C complex.</text>
</comment>
<comment type="subcellular location">
    <subcellularLocation>
        <location evidence="1">Nucleus</location>
    </subcellularLocation>
    <subcellularLocation>
        <location evidence="1">Nucleus speckle</location>
    </subcellularLocation>
    <subcellularLocation>
        <location evidence="1">Cytoplasm</location>
    </subcellularLocation>
    <text evidence="1 2">Detected in granule-like structures in the dendroplasm. Travels to the cytoplasm as part of the exon junction complex (EJC) bound to mRNA. Colocalizes with the core EJC, ALYREF/THOC4, NXF1 and UAP56 in the nucleus and nuclear speckles.</text>
</comment>
<comment type="tissue specificity">
    <text evidence="3">Ubiquitous. Detected in brain, heart, liver, lung, spleen and testis.</text>
</comment>
<comment type="similarity">
    <text evidence="4">Belongs to the mago nashi family.</text>
</comment>
<evidence type="ECO:0000250" key="1">
    <source>
        <dbReference type="UniProtKB" id="P61326"/>
    </source>
</evidence>
<evidence type="ECO:0000250" key="2">
    <source>
        <dbReference type="UniProtKB" id="Q27W02"/>
    </source>
</evidence>
<evidence type="ECO:0000269" key="3">
    <source>
    </source>
</evidence>
<evidence type="ECO:0000305" key="4"/>
<keyword id="KW-0007">Acetylation</keyword>
<keyword id="KW-0963">Cytoplasm</keyword>
<keyword id="KW-0507">mRNA processing</keyword>
<keyword id="KW-0508">mRNA splicing</keyword>
<keyword id="KW-0509">mRNA transport</keyword>
<keyword id="KW-0866">Nonsense-mediated mRNA decay</keyword>
<keyword id="KW-0539">Nucleus</keyword>
<keyword id="KW-1185">Reference proteome</keyword>
<keyword id="KW-0694">RNA-binding</keyword>
<keyword id="KW-0747">Spliceosome</keyword>
<keyword id="KW-0810">Translation regulation</keyword>
<keyword id="KW-0813">Transport</keyword>
<name>MGN_MOUSE</name>
<protein>
    <recommendedName>
        <fullName>Protein mago nashi homolog</fullName>
    </recommendedName>
</protein>
<dbReference type="EMBL" id="AF007862">
    <property type="protein sequence ID" value="AAB66722.1"/>
    <property type="molecule type" value="mRNA"/>
</dbReference>
<dbReference type="EMBL" id="AF035939">
    <property type="protein sequence ID" value="AAC40044.1"/>
    <property type="molecule type" value="mRNA"/>
</dbReference>
<dbReference type="EMBL" id="AK011512">
    <property type="protein sequence ID" value="BAB27668.1"/>
    <property type="molecule type" value="mRNA"/>
</dbReference>
<dbReference type="EMBL" id="AL611936">
    <property type="status" value="NOT_ANNOTATED_CDS"/>
    <property type="molecule type" value="Genomic_DNA"/>
</dbReference>
<dbReference type="EMBL" id="CH466527">
    <property type="protein sequence ID" value="EDL30768.1"/>
    <property type="molecule type" value="Genomic_DNA"/>
</dbReference>
<dbReference type="EMBL" id="BC018176">
    <property type="protein sequence ID" value="AAH18176.1"/>
    <property type="molecule type" value="mRNA"/>
</dbReference>
<dbReference type="CCDS" id="CCDS18441.1"/>
<dbReference type="RefSeq" id="NP_001269666.1">
    <property type="nucleotide sequence ID" value="NM_001282737.1"/>
</dbReference>
<dbReference type="SMR" id="P61327"/>
<dbReference type="BioGRID" id="201297">
    <property type="interactions" value="66"/>
</dbReference>
<dbReference type="ComplexPortal" id="CPX-635">
    <property type="entry name" value="Exon junction core complex, Magoh variant"/>
</dbReference>
<dbReference type="ComplexPortal" id="CPX-638">
    <property type="entry name" value="Exon junction subcomplex magoh-y14"/>
</dbReference>
<dbReference type="FunCoup" id="P61327">
    <property type="interactions" value="3851"/>
</dbReference>
<dbReference type="IntAct" id="P61327">
    <property type="interactions" value="26"/>
</dbReference>
<dbReference type="STRING" id="10090.ENSMUSP00000030348"/>
<dbReference type="iPTMnet" id="P61327"/>
<dbReference type="PhosphoSitePlus" id="P61327"/>
<dbReference type="jPOST" id="P61327"/>
<dbReference type="PaxDb" id="10090-ENSMUSP00000030348"/>
<dbReference type="PeptideAtlas" id="P61327"/>
<dbReference type="ProteomicsDB" id="293470"/>
<dbReference type="Pumba" id="P61327"/>
<dbReference type="TopDownProteomics" id="P61327"/>
<dbReference type="Antibodypedia" id="4217">
    <property type="antibodies" value="304 antibodies from 32 providers"/>
</dbReference>
<dbReference type="DNASU" id="17149"/>
<dbReference type="Ensembl" id="ENSMUST00000030348.6">
    <property type="protein sequence ID" value="ENSMUSP00000030348.6"/>
    <property type="gene ID" value="ENSMUSG00000028609.7"/>
</dbReference>
<dbReference type="GeneID" id="17149"/>
<dbReference type="KEGG" id="mmu:17149"/>
<dbReference type="UCSC" id="uc008uaj.2">
    <property type="organism name" value="mouse"/>
</dbReference>
<dbReference type="AGR" id="MGI:1330312"/>
<dbReference type="CTD" id="4116"/>
<dbReference type="MGI" id="MGI:1330312">
    <property type="gene designation" value="Magoh"/>
</dbReference>
<dbReference type="VEuPathDB" id="HostDB:ENSMUSG00000028609"/>
<dbReference type="eggNOG" id="KOG3392">
    <property type="taxonomic scope" value="Eukaryota"/>
</dbReference>
<dbReference type="GeneTree" id="ENSGT00390000003156"/>
<dbReference type="HOGENOM" id="CLU_109497_1_1_1"/>
<dbReference type="InParanoid" id="P61327"/>
<dbReference type="OMA" id="IRKEMWI"/>
<dbReference type="OrthoDB" id="9547621at2759"/>
<dbReference type="PhylomeDB" id="P61327"/>
<dbReference type="TreeFam" id="TF300128"/>
<dbReference type="Reactome" id="R-MMU-159236">
    <property type="pathway name" value="Transport of Mature mRNA derived from an Intron-Containing Transcript"/>
</dbReference>
<dbReference type="Reactome" id="R-MMU-72163">
    <property type="pathway name" value="mRNA Splicing - Major Pathway"/>
</dbReference>
<dbReference type="Reactome" id="R-MMU-72187">
    <property type="pathway name" value="mRNA 3'-end processing"/>
</dbReference>
<dbReference type="Reactome" id="R-MMU-73856">
    <property type="pathway name" value="RNA Polymerase II Transcription Termination"/>
</dbReference>
<dbReference type="Reactome" id="R-MMU-975957">
    <property type="pathway name" value="Nonsense Mediated Decay (NMD) enhanced by the Exon Junction Complex (EJC)"/>
</dbReference>
<dbReference type="BioGRID-ORCS" id="17149">
    <property type="hits" value="24 hits in 74 CRISPR screens"/>
</dbReference>
<dbReference type="ChiTaRS" id="Magoh">
    <property type="organism name" value="mouse"/>
</dbReference>
<dbReference type="PRO" id="PR:P61327"/>
<dbReference type="Proteomes" id="UP000000589">
    <property type="component" value="Chromosome 4"/>
</dbReference>
<dbReference type="RNAct" id="P61327">
    <property type="molecule type" value="protein"/>
</dbReference>
<dbReference type="Bgee" id="ENSMUSG00000028609">
    <property type="expression patterns" value="Expressed in animal zygote and 68 other cell types or tissues"/>
</dbReference>
<dbReference type="GO" id="GO:0071013">
    <property type="term" value="C:catalytic step 2 spliceosome"/>
    <property type="evidence" value="ECO:0007669"/>
    <property type="project" value="Ensembl"/>
</dbReference>
<dbReference type="GO" id="GO:0005829">
    <property type="term" value="C:cytosol"/>
    <property type="evidence" value="ECO:0000303"/>
    <property type="project" value="ComplexPortal"/>
</dbReference>
<dbReference type="GO" id="GO:0035145">
    <property type="term" value="C:exon-exon junction complex"/>
    <property type="evidence" value="ECO:0000266"/>
    <property type="project" value="ComplexPortal"/>
</dbReference>
<dbReference type="GO" id="GO:1990501">
    <property type="term" value="C:exon-exon junction subcomplex mago-y14"/>
    <property type="evidence" value="ECO:0000266"/>
    <property type="project" value="ComplexPortal"/>
</dbReference>
<dbReference type="GO" id="GO:0016607">
    <property type="term" value="C:nuclear speck"/>
    <property type="evidence" value="ECO:0007669"/>
    <property type="project" value="UniProtKB-SubCell"/>
</dbReference>
<dbReference type="GO" id="GO:0005634">
    <property type="term" value="C:nucleus"/>
    <property type="evidence" value="ECO:0000303"/>
    <property type="project" value="ComplexPortal"/>
</dbReference>
<dbReference type="GO" id="GO:0003723">
    <property type="term" value="F:RNA binding"/>
    <property type="evidence" value="ECO:0007669"/>
    <property type="project" value="UniProtKB-KW"/>
</dbReference>
<dbReference type="GO" id="GO:0007292">
    <property type="term" value="P:female gamete generation"/>
    <property type="evidence" value="ECO:0000303"/>
    <property type="project" value="UniProtKB"/>
</dbReference>
<dbReference type="GO" id="GO:0006406">
    <property type="term" value="P:mRNA export from nucleus"/>
    <property type="evidence" value="ECO:0000303"/>
    <property type="project" value="ComplexPortal"/>
</dbReference>
<dbReference type="GO" id="GO:0006397">
    <property type="term" value="P:mRNA processing"/>
    <property type="evidence" value="ECO:0007669"/>
    <property type="project" value="UniProtKB-KW"/>
</dbReference>
<dbReference type="GO" id="GO:0000184">
    <property type="term" value="P:nuclear-transcribed mRNA catabolic process, nonsense-mediated decay"/>
    <property type="evidence" value="ECO:0007669"/>
    <property type="project" value="UniProtKB-KW"/>
</dbReference>
<dbReference type="GO" id="GO:0000381">
    <property type="term" value="P:regulation of alternative mRNA splicing, via spliceosome"/>
    <property type="evidence" value="ECO:0000250"/>
    <property type="project" value="UniProtKB"/>
</dbReference>
<dbReference type="GO" id="GO:0050684">
    <property type="term" value="P:regulation of mRNA processing"/>
    <property type="evidence" value="ECO:0000266"/>
    <property type="project" value="ComplexPortal"/>
</dbReference>
<dbReference type="GO" id="GO:2000622">
    <property type="term" value="P:regulation of nuclear-transcribed mRNA catabolic process, nonsense-mediated decay"/>
    <property type="evidence" value="ECO:0000266"/>
    <property type="project" value="ComplexPortal"/>
</dbReference>
<dbReference type="GO" id="GO:0006417">
    <property type="term" value="P:regulation of translation"/>
    <property type="evidence" value="ECO:0007669"/>
    <property type="project" value="UniProtKB-KW"/>
</dbReference>
<dbReference type="GO" id="GO:0008380">
    <property type="term" value="P:RNA splicing"/>
    <property type="evidence" value="ECO:0007669"/>
    <property type="project" value="UniProtKB-KW"/>
</dbReference>
<dbReference type="CDD" id="cd11295">
    <property type="entry name" value="Mago_nashi"/>
    <property type="match status" value="1"/>
</dbReference>
<dbReference type="FunFam" id="3.30.1560.10:FF:000001">
    <property type="entry name" value="Protein mago nashi homolog"/>
    <property type="match status" value="1"/>
</dbReference>
<dbReference type="Gene3D" id="3.30.1560.10">
    <property type="entry name" value="Mago nashi"/>
    <property type="match status" value="1"/>
</dbReference>
<dbReference type="InterPro" id="IPR004023">
    <property type="entry name" value="Mago_nashi"/>
</dbReference>
<dbReference type="InterPro" id="IPR036605">
    <property type="entry name" value="Mago_nashi_sf"/>
</dbReference>
<dbReference type="PANTHER" id="PTHR12638">
    <property type="entry name" value="PROTEIN MAGO NASHI HOMOLOG"/>
    <property type="match status" value="1"/>
</dbReference>
<dbReference type="PANTHER" id="PTHR12638:SF2">
    <property type="entry name" value="PROTEIN MAGO NASHI HOMOLOG"/>
    <property type="match status" value="1"/>
</dbReference>
<dbReference type="Pfam" id="PF02792">
    <property type="entry name" value="Mago_nashi"/>
    <property type="match status" value="1"/>
</dbReference>
<dbReference type="SUPFAM" id="SSF89817">
    <property type="entry name" value="Mago nashi protein"/>
    <property type="match status" value="1"/>
</dbReference>
<organism>
    <name type="scientific">Mus musculus</name>
    <name type="common">Mouse</name>
    <dbReference type="NCBI Taxonomy" id="10090"/>
    <lineage>
        <taxon>Eukaryota</taxon>
        <taxon>Metazoa</taxon>
        <taxon>Chordata</taxon>
        <taxon>Craniata</taxon>
        <taxon>Vertebrata</taxon>
        <taxon>Euteleostomi</taxon>
        <taxon>Mammalia</taxon>
        <taxon>Eutheria</taxon>
        <taxon>Euarchontoglires</taxon>
        <taxon>Glires</taxon>
        <taxon>Rodentia</taxon>
        <taxon>Myomorpha</taxon>
        <taxon>Muroidea</taxon>
        <taxon>Muridae</taxon>
        <taxon>Murinae</taxon>
        <taxon>Mus</taxon>
        <taxon>Mus</taxon>
    </lineage>
</organism>
<reference key="1">
    <citation type="journal article" date="1997" name="Development">
        <title>Mago nashi mediates the posterior follicle cell-to-oocyte signal to organize axis formation in Drosophila.</title>
        <authorList>
            <person name="Newmark P.A."/>
            <person name="Mohr S.E."/>
            <person name="Gong L."/>
            <person name="Boswell R.E."/>
        </authorList>
    </citation>
    <scope>NUCLEOTIDE SEQUENCE [MRNA]</scope>
</reference>
<reference key="2">
    <citation type="journal article" date="1998" name="Genomics">
        <title>The mammalian homologue of mago nashi encodes a serum-inducible protein.</title>
        <authorList>
            <person name="Zhao X.F."/>
            <person name="Colaizzo-Anas T."/>
            <person name="Nowak N.J."/>
            <person name="Shows T.B."/>
            <person name="Elliott R.W."/>
            <person name="Aplan P.D."/>
        </authorList>
    </citation>
    <scope>NUCLEOTIDE SEQUENCE [MRNA]</scope>
</reference>
<reference key="3">
    <citation type="journal article" date="2005" name="Science">
        <title>The transcriptional landscape of the mammalian genome.</title>
        <authorList>
            <person name="Carninci P."/>
            <person name="Kasukawa T."/>
            <person name="Katayama S."/>
            <person name="Gough J."/>
            <person name="Frith M.C."/>
            <person name="Maeda N."/>
            <person name="Oyama R."/>
            <person name="Ravasi T."/>
            <person name="Lenhard B."/>
            <person name="Wells C."/>
            <person name="Kodzius R."/>
            <person name="Shimokawa K."/>
            <person name="Bajic V.B."/>
            <person name="Brenner S.E."/>
            <person name="Batalov S."/>
            <person name="Forrest A.R."/>
            <person name="Zavolan M."/>
            <person name="Davis M.J."/>
            <person name="Wilming L.G."/>
            <person name="Aidinis V."/>
            <person name="Allen J.E."/>
            <person name="Ambesi-Impiombato A."/>
            <person name="Apweiler R."/>
            <person name="Aturaliya R.N."/>
            <person name="Bailey T.L."/>
            <person name="Bansal M."/>
            <person name="Baxter L."/>
            <person name="Beisel K.W."/>
            <person name="Bersano T."/>
            <person name="Bono H."/>
            <person name="Chalk A.M."/>
            <person name="Chiu K.P."/>
            <person name="Choudhary V."/>
            <person name="Christoffels A."/>
            <person name="Clutterbuck D.R."/>
            <person name="Crowe M.L."/>
            <person name="Dalla E."/>
            <person name="Dalrymple B.P."/>
            <person name="de Bono B."/>
            <person name="Della Gatta G."/>
            <person name="di Bernardo D."/>
            <person name="Down T."/>
            <person name="Engstrom P."/>
            <person name="Fagiolini M."/>
            <person name="Faulkner G."/>
            <person name="Fletcher C.F."/>
            <person name="Fukushima T."/>
            <person name="Furuno M."/>
            <person name="Futaki S."/>
            <person name="Gariboldi M."/>
            <person name="Georgii-Hemming P."/>
            <person name="Gingeras T.R."/>
            <person name="Gojobori T."/>
            <person name="Green R.E."/>
            <person name="Gustincich S."/>
            <person name="Harbers M."/>
            <person name="Hayashi Y."/>
            <person name="Hensch T.K."/>
            <person name="Hirokawa N."/>
            <person name="Hill D."/>
            <person name="Huminiecki L."/>
            <person name="Iacono M."/>
            <person name="Ikeo K."/>
            <person name="Iwama A."/>
            <person name="Ishikawa T."/>
            <person name="Jakt M."/>
            <person name="Kanapin A."/>
            <person name="Katoh M."/>
            <person name="Kawasawa Y."/>
            <person name="Kelso J."/>
            <person name="Kitamura H."/>
            <person name="Kitano H."/>
            <person name="Kollias G."/>
            <person name="Krishnan S.P."/>
            <person name="Kruger A."/>
            <person name="Kummerfeld S.K."/>
            <person name="Kurochkin I.V."/>
            <person name="Lareau L.F."/>
            <person name="Lazarevic D."/>
            <person name="Lipovich L."/>
            <person name="Liu J."/>
            <person name="Liuni S."/>
            <person name="McWilliam S."/>
            <person name="Madan Babu M."/>
            <person name="Madera M."/>
            <person name="Marchionni L."/>
            <person name="Matsuda H."/>
            <person name="Matsuzawa S."/>
            <person name="Miki H."/>
            <person name="Mignone F."/>
            <person name="Miyake S."/>
            <person name="Morris K."/>
            <person name="Mottagui-Tabar S."/>
            <person name="Mulder N."/>
            <person name="Nakano N."/>
            <person name="Nakauchi H."/>
            <person name="Ng P."/>
            <person name="Nilsson R."/>
            <person name="Nishiguchi S."/>
            <person name="Nishikawa S."/>
            <person name="Nori F."/>
            <person name="Ohara O."/>
            <person name="Okazaki Y."/>
            <person name="Orlando V."/>
            <person name="Pang K.C."/>
            <person name="Pavan W.J."/>
            <person name="Pavesi G."/>
            <person name="Pesole G."/>
            <person name="Petrovsky N."/>
            <person name="Piazza S."/>
            <person name="Reed J."/>
            <person name="Reid J.F."/>
            <person name="Ring B.Z."/>
            <person name="Ringwald M."/>
            <person name="Rost B."/>
            <person name="Ruan Y."/>
            <person name="Salzberg S.L."/>
            <person name="Sandelin A."/>
            <person name="Schneider C."/>
            <person name="Schoenbach C."/>
            <person name="Sekiguchi K."/>
            <person name="Semple C.A."/>
            <person name="Seno S."/>
            <person name="Sessa L."/>
            <person name="Sheng Y."/>
            <person name="Shibata Y."/>
            <person name="Shimada H."/>
            <person name="Shimada K."/>
            <person name="Silva D."/>
            <person name="Sinclair B."/>
            <person name="Sperling S."/>
            <person name="Stupka E."/>
            <person name="Sugiura K."/>
            <person name="Sultana R."/>
            <person name="Takenaka Y."/>
            <person name="Taki K."/>
            <person name="Tammoja K."/>
            <person name="Tan S.L."/>
            <person name="Tang S."/>
            <person name="Taylor M.S."/>
            <person name="Tegner J."/>
            <person name="Teichmann S.A."/>
            <person name="Ueda H.R."/>
            <person name="van Nimwegen E."/>
            <person name="Verardo R."/>
            <person name="Wei C.L."/>
            <person name="Yagi K."/>
            <person name="Yamanishi H."/>
            <person name="Zabarovsky E."/>
            <person name="Zhu S."/>
            <person name="Zimmer A."/>
            <person name="Hide W."/>
            <person name="Bult C."/>
            <person name="Grimmond S.M."/>
            <person name="Teasdale R.D."/>
            <person name="Liu E.T."/>
            <person name="Brusic V."/>
            <person name="Quackenbush J."/>
            <person name="Wahlestedt C."/>
            <person name="Mattick J.S."/>
            <person name="Hume D.A."/>
            <person name="Kai C."/>
            <person name="Sasaki D."/>
            <person name="Tomaru Y."/>
            <person name="Fukuda S."/>
            <person name="Kanamori-Katayama M."/>
            <person name="Suzuki M."/>
            <person name="Aoki J."/>
            <person name="Arakawa T."/>
            <person name="Iida J."/>
            <person name="Imamura K."/>
            <person name="Itoh M."/>
            <person name="Kato T."/>
            <person name="Kawaji H."/>
            <person name="Kawagashira N."/>
            <person name="Kawashima T."/>
            <person name="Kojima M."/>
            <person name="Kondo S."/>
            <person name="Konno H."/>
            <person name="Nakano K."/>
            <person name="Ninomiya N."/>
            <person name="Nishio T."/>
            <person name="Okada M."/>
            <person name="Plessy C."/>
            <person name="Shibata K."/>
            <person name="Shiraki T."/>
            <person name="Suzuki S."/>
            <person name="Tagami M."/>
            <person name="Waki K."/>
            <person name="Watahiki A."/>
            <person name="Okamura-Oho Y."/>
            <person name="Suzuki H."/>
            <person name="Kawai J."/>
            <person name="Hayashizaki Y."/>
        </authorList>
    </citation>
    <scope>NUCLEOTIDE SEQUENCE [LARGE SCALE MRNA]</scope>
    <source>
        <strain>C57BL/6J</strain>
    </source>
</reference>
<reference key="4">
    <citation type="journal article" date="2009" name="PLoS Biol.">
        <title>Lineage-specific biology revealed by a finished genome assembly of the mouse.</title>
        <authorList>
            <person name="Church D.M."/>
            <person name="Goodstadt L."/>
            <person name="Hillier L.W."/>
            <person name="Zody M.C."/>
            <person name="Goldstein S."/>
            <person name="She X."/>
            <person name="Bult C.J."/>
            <person name="Agarwala R."/>
            <person name="Cherry J.L."/>
            <person name="DiCuccio M."/>
            <person name="Hlavina W."/>
            <person name="Kapustin Y."/>
            <person name="Meric P."/>
            <person name="Maglott D."/>
            <person name="Birtle Z."/>
            <person name="Marques A.C."/>
            <person name="Graves T."/>
            <person name="Zhou S."/>
            <person name="Teague B."/>
            <person name="Potamousis K."/>
            <person name="Churas C."/>
            <person name="Place M."/>
            <person name="Herschleb J."/>
            <person name="Runnheim R."/>
            <person name="Forrest D."/>
            <person name="Amos-Landgraf J."/>
            <person name="Schwartz D.C."/>
            <person name="Cheng Z."/>
            <person name="Lindblad-Toh K."/>
            <person name="Eichler E.E."/>
            <person name="Ponting C.P."/>
        </authorList>
    </citation>
    <scope>NUCLEOTIDE SEQUENCE [LARGE SCALE GENOMIC DNA]</scope>
    <source>
        <strain>C57BL/6J</strain>
    </source>
</reference>
<reference key="5">
    <citation type="submission" date="2005-09" db="EMBL/GenBank/DDBJ databases">
        <authorList>
            <person name="Mural R.J."/>
            <person name="Adams M.D."/>
            <person name="Myers E.W."/>
            <person name="Smith H.O."/>
            <person name="Venter J.C."/>
        </authorList>
    </citation>
    <scope>NUCLEOTIDE SEQUENCE [LARGE SCALE GENOMIC DNA]</scope>
</reference>
<reference key="6">
    <citation type="journal article" date="2004" name="Genome Res.">
        <title>The status, quality, and expansion of the NIH full-length cDNA project: the Mammalian Gene Collection (MGC).</title>
        <authorList>
            <consortium name="The MGC Project Team"/>
        </authorList>
    </citation>
    <scope>NUCLEOTIDE SEQUENCE [LARGE SCALE MRNA]</scope>
</reference>
<reference key="7">
    <citation type="journal article" date="2013" name="RNA Biol.">
        <title>Two mammalian MAGOH genes contribute to exon junction complex composition and nonsense-mediated decay.</title>
        <authorList>
            <person name="Singh K.K."/>
            <person name="Wachsmuth L."/>
            <person name="Kulozik A.E."/>
            <person name="Gehring N.H."/>
        </authorList>
    </citation>
    <scope>TISSUE SPECIFICITY</scope>
</reference>
<accession>P61327</accession>
<accession>A2A8E0</accession>
<accession>O35169</accession>
<accession>P50606</accession>
<sequence>MESDFYLRYYVGHKGKFGHEFLEFEFRPDGKLRYANNSNYKNDVMIRKEAYVHKSVMEELKRIIDDSEITKEDDALWPPPDRVGRQELEIVIGDEHISFTTSKIGSLIDVNQSKDPEGLRVFYYLVQDLKCLVFSLIGLHFKIKPI</sequence>